<comment type="subcellular location">
    <subcellularLocation>
        <location>Plastid</location>
        <location>Chloroplast</location>
    </subcellularLocation>
</comment>
<comment type="similarity">
    <text evidence="1">Belongs to the bacterial ribosomal protein bL33 family.</text>
</comment>
<accession>Q0G9J8</accession>
<sequence>MAKGKDVRGIVILQCTSCVRNDFNKESRGTSRYITQKNRHNTPSRLELRKFCPYCYKHTIHGEIKK</sequence>
<keyword id="KW-0150">Chloroplast</keyword>
<keyword id="KW-0934">Plastid</keyword>
<keyword id="KW-0687">Ribonucleoprotein</keyword>
<keyword id="KW-0689">Ribosomal protein</keyword>
<geneLocation type="chloroplast"/>
<dbReference type="EMBL" id="DQ899947">
    <property type="protein sequence ID" value="ABI32530.1"/>
    <property type="molecule type" value="Genomic_DNA"/>
</dbReference>
<dbReference type="RefSeq" id="YP_740223.1">
    <property type="nucleotide sequence ID" value="NC_008326.1"/>
</dbReference>
<dbReference type="GeneID" id="4266647"/>
<dbReference type="GO" id="GO:0009507">
    <property type="term" value="C:chloroplast"/>
    <property type="evidence" value="ECO:0007669"/>
    <property type="project" value="UniProtKB-SubCell"/>
</dbReference>
<dbReference type="GO" id="GO:1990904">
    <property type="term" value="C:ribonucleoprotein complex"/>
    <property type="evidence" value="ECO:0007669"/>
    <property type="project" value="UniProtKB-KW"/>
</dbReference>
<dbReference type="GO" id="GO:0005840">
    <property type="term" value="C:ribosome"/>
    <property type="evidence" value="ECO:0007669"/>
    <property type="project" value="UniProtKB-KW"/>
</dbReference>
<dbReference type="GO" id="GO:0003735">
    <property type="term" value="F:structural constituent of ribosome"/>
    <property type="evidence" value="ECO:0007669"/>
    <property type="project" value="InterPro"/>
</dbReference>
<dbReference type="GO" id="GO:0006412">
    <property type="term" value="P:translation"/>
    <property type="evidence" value="ECO:0007669"/>
    <property type="project" value="UniProtKB-UniRule"/>
</dbReference>
<dbReference type="Gene3D" id="2.20.28.120">
    <property type="entry name" value="Ribosomal protein L33"/>
    <property type="match status" value="1"/>
</dbReference>
<dbReference type="HAMAP" id="MF_00294">
    <property type="entry name" value="Ribosomal_bL33"/>
    <property type="match status" value="1"/>
</dbReference>
<dbReference type="InterPro" id="IPR001705">
    <property type="entry name" value="Ribosomal_bL33"/>
</dbReference>
<dbReference type="InterPro" id="IPR018264">
    <property type="entry name" value="Ribosomal_bL33_CS"/>
</dbReference>
<dbReference type="InterPro" id="IPR038584">
    <property type="entry name" value="Ribosomal_bL33_sf"/>
</dbReference>
<dbReference type="InterPro" id="IPR011332">
    <property type="entry name" value="Ribosomal_zn-bd"/>
</dbReference>
<dbReference type="NCBIfam" id="NF001764">
    <property type="entry name" value="PRK00504.1"/>
    <property type="match status" value="1"/>
</dbReference>
<dbReference type="NCBIfam" id="NF001860">
    <property type="entry name" value="PRK00595.1"/>
    <property type="match status" value="1"/>
</dbReference>
<dbReference type="NCBIfam" id="TIGR01023">
    <property type="entry name" value="rpmG_bact"/>
    <property type="match status" value="1"/>
</dbReference>
<dbReference type="PANTHER" id="PTHR43168">
    <property type="entry name" value="50S RIBOSOMAL PROTEIN L33, CHLOROPLASTIC"/>
    <property type="match status" value="1"/>
</dbReference>
<dbReference type="PANTHER" id="PTHR43168:SF2">
    <property type="entry name" value="LARGE RIBOSOMAL SUBUNIT PROTEIN BL33C"/>
    <property type="match status" value="1"/>
</dbReference>
<dbReference type="Pfam" id="PF00471">
    <property type="entry name" value="Ribosomal_L33"/>
    <property type="match status" value="1"/>
</dbReference>
<dbReference type="SUPFAM" id="SSF57829">
    <property type="entry name" value="Zn-binding ribosomal proteins"/>
    <property type="match status" value="1"/>
</dbReference>
<dbReference type="PROSITE" id="PS00582">
    <property type="entry name" value="RIBOSOMAL_L33"/>
    <property type="match status" value="1"/>
</dbReference>
<name>RK33_LIRTU</name>
<proteinExistence type="inferred from homology"/>
<organism>
    <name type="scientific">Liriodendron tulipifera</name>
    <name type="common">Tuliptree</name>
    <name type="synonym">Tulip poplar</name>
    <dbReference type="NCBI Taxonomy" id="3415"/>
    <lineage>
        <taxon>Eukaryota</taxon>
        <taxon>Viridiplantae</taxon>
        <taxon>Streptophyta</taxon>
        <taxon>Embryophyta</taxon>
        <taxon>Tracheophyta</taxon>
        <taxon>Spermatophyta</taxon>
        <taxon>Magnoliopsida</taxon>
        <taxon>Magnoliidae</taxon>
        <taxon>Magnoliales</taxon>
        <taxon>Magnoliaceae</taxon>
        <taxon>Liriodendron</taxon>
    </lineage>
</organism>
<gene>
    <name evidence="1" type="primary">rpl33</name>
</gene>
<evidence type="ECO:0000255" key="1">
    <source>
        <dbReference type="HAMAP-Rule" id="MF_00294"/>
    </source>
</evidence>
<evidence type="ECO:0000305" key="2"/>
<reference key="1">
    <citation type="journal article" date="2006" name="BMC Evol. Biol.">
        <title>Complete plastid genome sequences of Drimys, Liriodendron, and Piper: implications for the phylogenetic relationships of magnoliids.</title>
        <authorList>
            <person name="Cai Z."/>
            <person name="Penaflor C."/>
            <person name="Kuehl J.V."/>
            <person name="Leebens-Mack J."/>
            <person name="Carlson J.E."/>
            <person name="dePamphilis C.W."/>
            <person name="Boore J.L."/>
            <person name="Jansen R.K."/>
        </authorList>
    </citation>
    <scope>NUCLEOTIDE SEQUENCE [LARGE SCALE GENOMIC DNA]</scope>
</reference>
<protein>
    <recommendedName>
        <fullName evidence="1">Large ribosomal subunit protein bL33c</fullName>
    </recommendedName>
    <alternativeName>
        <fullName evidence="2">50S ribosomal protein L33, chloroplastic</fullName>
    </alternativeName>
</protein>
<feature type="chain" id="PRO_0000276508" description="Large ribosomal subunit protein bL33c">
    <location>
        <begin position="1"/>
        <end position="66"/>
    </location>
</feature>